<accession>Q02BS4</accession>
<comment type="function">
    <text evidence="1">The glycine cleavage system catalyzes the degradation of glycine. The P protein binds the alpha-amino group of glycine through its pyridoxal phosphate cofactor; CO(2) is released and the remaining methylamine moiety is then transferred to the lipoamide cofactor of the H protein.</text>
</comment>
<comment type="catalytic activity">
    <reaction evidence="1">
        <text>N(6)-[(R)-lipoyl]-L-lysyl-[glycine-cleavage complex H protein] + glycine + H(+) = N(6)-[(R)-S(8)-aminomethyldihydrolipoyl]-L-lysyl-[glycine-cleavage complex H protein] + CO2</text>
        <dbReference type="Rhea" id="RHEA:24304"/>
        <dbReference type="Rhea" id="RHEA-COMP:10494"/>
        <dbReference type="Rhea" id="RHEA-COMP:10495"/>
        <dbReference type="ChEBI" id="CHEBI:15378"/>
        <dbReference type="ChEBI" id="CHEBI:16526"/>
        <dbReference type="ChEBI" id="CHEBI:57305"/>
        <dbReference type="ChEBI" id="CHEBI:83099"/>
        <dbReference type="ChEBI" id="CHEBI:83143"/>
        <dbReference type="EC" id="1.4.4.2"/>
    </reaction>
</comment>
<comment type="subunit">
    <text evidence="1">The glycine cleavage system is composed of four proteins: P, T, L and H. In this organism, the P 'protein' is a heterodimer of two subunits.</text>
</comment>
<comment type="similarity">
    <text evidence="1">Belongs to the GcvP family. N-terminal subunit subfamily.</text>
</comment>
<organism>
    <name type="scientific">Solibacter usitatus (strain Ellin6076)</name>
    <dbReference type="NCBI Taxonomy" id="234267"/>
    <lineage>
        <taxon>Bacteria</taxon>
        <taxon>Pseudomonadati</taxon>
        <taxon>Acidobacteriota</taxon>
        <taxon>Terriglobia</taxon>
        <taxon>Bryobacterales</taxon>
        <taxon>Solibacteraceae</taxon>
        <taxon>Candidatus Solibacter</taxon>
    </lineage>
</organism>
<proteinExistence type="inferred from homology"/>
<reference key="1">
    <citation type="journal article" date="2009" name="Appl. Environ. Microbiol.">
        <title>Three genomes from the phylum Acidobacteria provide insight into the lifestyles of these microorganisms in soils.</title>
        <authorList>
            <person name="Ward N.L."/>
            <person name="Challacombe J.F."/>
            <person name="Janssen P.H."/>
            <person name="Henrissat B."/>
            <person name="Coutinho P.M."/>
            <person name="Wu M."/>
            <person name="Xie G."/>
            <person name="Haft D.H."/>
            <person name="Sait M."/>
            <person name="Badger J."/>
            <person name="Barabote R.D."/>
            <person name="Bradley B."/>
            <person name="Brettin T.S."/>
            <person name="Brinkac L.M."/>
            <person name="Bruce D."/>
            <person name="Creasy T."/>
            <person name="Daugherty S.C."/>
            <person name="Davidsen T.M."/>
            <person name="DeBoy R.T."/>
            <person name="Detter J.C."/>
            <person name="Dodson R.J."/>
            <person name="Durkin A.S."/>
            <person name="Ganapathy A."/>
            <person name="Gwinn-Giglio M."/>
            <person name="Han C.S."/>
            <person name="Khouri H."/>
            <person name="Kiss H."/>
            <person name="Kothari S.P."/>
            <person name="Madupu R."/>
            <person name="Nelson K.E."/>
            <person name="Nelson W.C."/>
            <person name="Paulsen I."/>
            <person name="Penn K."/>
            <person name="Ren Q."/>
            <person name="Rosovitz M.J."/>
            <person name="Selengut J.D."/>
            <person name="Shrivastava S."/>
            <person name="Sullivan S.A."/>
            <person name="Tapia R."/>
            <person name="Thompson L.S."/>
            <person name="Watkins K.L."/>
            <person name="Yang Q."/>
            <person name="Yu C."/>
            <person name="Zafar N."/>
            <person name="Zhou L."/>
            <person name="Kuske C.R."/>
        </authorList>
    </citation>
    <scope>NUCLEOTIDE SEQUENCE [LARGE SCALE GENOMIC DNA]</scope>
    <source>
        <strain>Ellin6076</strain>
    </source>
</reference>
<protein>
    <recommendedName>
        <fullName evidence="1">Probable glycine dehydrogenase (decarboxylating) subunit 1</fullName>
        <ecNumber evidence="1">1.4.4.2</ecNumber>
    </recommendedName>
    <alternativeName>
        <fullName evidence="1">Glycine cleavage system P-protein subunit 1</fullName>
    </alternativeName>
    <alternativeName>
        <fullName evidence="1">Glycine decarboxylase subunit 1</fullName>
    </alternativeName>
    <alternativeName>
        <fullName evidence="1">Glycine dehydrogenase (aminomethyl-transferring) subunit 1</fullName>
    </alternativeName>
</protein>
<feature type="chain" id="PRO_1000045676" description="Probable glycine dehydrogenase (decarboxylating) subunit 1">
    <location>
        <begin position="1"/>
        <end position="449"/>
    </location>
</feature>
<dbReference type="EC" id="1.4.4.2" evidence="1"/>
<dbReference type="EMBL" id="CP000473">
    <property type="protein sequence ID" value="ABJ81492.1"/>
    <property type="molecule type" value="Genomic_DNA"/>
</dbReference>
<dbReference type="SMR" id="Q02BS4"/>
<dbReference type="STRING" id="234267.Acid_0482"/>
<dbReference type="KEGG" id="sus:Acid_0482"/>
<dbReference type="eggNOG" id="COG0403">
    <property type="taxonomic scope" value="Bacteria"/>
</dbReference>
<dbReference type="HOGENOM" id="CLU_004620_0_2_0"/>
<dbReference type="InParanoid" id="Q02BS4"/>
<dbReference type="OrthoDB" id="9771867at2"/>
<dbReference type="GO" id="GO:0004375">
    <property type="term" value="F:glycine dehydrogenase (decarboxylating) activity"/>
    <property type="evidence" value="ECO:0007669"/>
    <property type="project" value="UniProtKB-EC"/>
</dbReference>
<dbReference type="GO" id="GO:0019464">
    <property type="term" value="P:glycine decarboxylation via glycine cleavage system"/>
    <property type="evidence" value="ECO:0007669"/>
    <property type="project" value="UniProtKB-UniRule"/>
</dbReference>
<dbReference type="GO" id="GO:0009116">
    <property type="term" value="P:nucleoside metabolic process"/>
    <property type="evidence" value="ECO:0007669"/>
    <property type="project" value="InterPro"/>
</dbReference>
<dbReference type="CDD" id="cd00613">
    <property type="entry name" value="GDC-P"/>
    <property type="match status" value="1"/>
</dbReference>
<dbReference type="Gene3D" id="3.90.1150.10">
    <property type="entry name" value="Aspartate Aminotransferase, domain 1"/>
    <property type="match status" value="1"/>
</dbReference>
<dbReference type="Gene3D" id="3.40.640.10">
    <property type="entry name" value="Type I PLP-dependent aspartate aminotransferase-like (Major domain)"/>
    <property type="match status" value="1"/>
</dbReference>
<dbReference type="HAMAP" id="MF_00712">
    <property type="entry name" value="GcvPA"/>
    <property type="match status" value="1"/>
</dbReference>
<dbReference type="InterPro" id="IPR023010">
    <property type="entry name" value="GcvPA"/>
</dbReference>
<dbReference type="InterPro" id="IPR049315">
    <property type="entry name" value="GDC-P_N"/>
</dbReference>
<dbReference type="InterPro" id="IPR020581">
    <property type="entry name" value="GDC_P"/>
</dbReference>
<dbReference type="InterPro" id="IPR015424">
    <property type="entry name" value="PyrdxlP-dep_Trfase"/>
</dbReference>
<dbReference type="InterPro" id="IPR015421">
    <property type="entry name" value="PyrdxlP-dep_Trfase_major"/>
</dbReference>
<dbReference type="InterPro" id="IPR015422">
    <property type="entry name" value="PyrdxlP-dep_Trfase_small"/>
</dbReference>
<dbReference type="NCBIfam" id="NF001696">
    <property type="entry name" value="PRK00451.1"/>
    <property type="match status" value="1"/>
</dbReference>
<dbReference type="PANTHER" id="PTHR42806">
    <property type="entry name" value="GLYCINE CLEAVAGE SYSTEM P-PROTEIN"/>
    <property type="match status" value="1"/>
</dbReference>
<dbReference type="PANTHER" id="PTHR42806:SF1">
    <property type="entry name" value="GLYCINE DEHYDROGENASE (DECARBOXYLATING)"/>
    <property type="match status" value="1"/>
</dbReference>
<dbReference type="Pfam" id="PF02347">
    <property type="entry name" value="GDC-P"/>
    <property type="match status" value="1"/>
</dbReference>
<dbReference type="PIRSF" id="PIRSF006815">
    <property type="entry name" value="GcvPA"/>
    <property type="match status" value="1"/>
</dbReference>
<dbReference type="SUPFAM" id="SSF53383">
    <property type="entry name" value="PLP-dependent transferases"/>
    <property type="match status" value="1"/>
</dbReference>
<name>GCSPA_SOLUE</name>
<gene>
    <name evidence="1" type="primary">gcvPA</name>
    <name type="ordered locus">Acid_0482</name>
</gene>
<keyword id="KW-0560">Oxidoreductase</keyword>
<evidence type="ECO:0000255" key="1">
    <source>
        <dbReference type="HAMAP-Rule" id="MF_00712"/>
    </source>
</evidence>
<sequence length="449" mass="49372">MRYLPKSESERRQMLEACGVSTPEELFAHLPDAVRLNRPLNLAPGISEYEIVQYFRERAEQNANGYASFLGAGVYNHYRPVLVDTVVSRGEFLTSYTPYQAEIAQGTLTTIFEFQTMICQLTGMDVANASMYDGSTAVPEAAMMAVRATGKGRVLISRTVHPEYREVLGTYAKHQGMPVQEFGYVAESGGLDLEDLERKMDDLTGAVIIQTPNFFGIVEQVKAAAEIAHKRGALLVVIFTEAVSLGLLEPPADADIVAGELQSFAISPSYGGPYAGIIAVKEKYIRQVPGRLVGQSLDSRGNRAFCLTLSTREQHIRREKATSNICTNQALIALMATVFMTVYGKQGLRELAEQNLAKAHYLASKLKPRFTGKFFNEFVVRAEGQTPEELNKQLLKKKIIGGLPLGRFYPELADSYLVCATEMTRRADMDALVAATTAQPATETVEVTA</sequence>